<proteinExistence type="inferred from homology"/>
<dbReference type="EC" id="4.2.1.19" evidence="1"/>
<dbReference type="EMBL" id="CP000001">
    <property type="protein sequence ID" value="AAU18956.1"/>
    <property type="molecule type" value="Genomic_DNA"/>
</dbReference>
<dbReference type="RefSeq" id="WP_001206629.1">
    <property type="nucleotide sequence ID" value="NC_006274.1"/>
</dbReference>
<dbReference type="SMR" id="Q63DX1"/>
<dbReference type="KEGG" id="bcz:BCE33L1292"/>
<dbReference type="PATRIC" id="fig|288681.22.peg.4262"/>
<dbReference type="UniPathway" id="UPA00031">
    <property type="reaction ID" value="UER00011"/>
</dbReference>
<dbReference type="Proteomes" id="UP000002612">
    <property type="component" value="Chromosome"/>
</dbReference>
<dbReference type="GO" id="GO:0005737">
    <property type="term" value="C:cytoplasm"/>
    <property type="evidence" value="ECO:0007669"/>
    <property type="project" value="UniProtKB-SubCell"/>
</dbReference>
<dbReference type="GO" id="GO:0004424">
    <property type="term" value="F:imidazoleglycerol-phosphate dehydratase activity"/>
    <property type="evidence" value="ECO:0007669"/>
    <property type="project" value="UniProtKB-UniRule"/>
</dbReference>
<dbReference type="GO" id="GO:0000105">
    <property type="term" value="P:L-histidine biosynthetic process"/>
    <property type="evidence" value="ECO:0007669"/>
    <property type="project" value="UniProtKB-UniRule"/>
</dbReference>
<dbReference type="CDD" id="cd07914">
    <property type="entry name" value="IGPD"/>
    <property type="match status" value="1"/>
</dbReference>
<dbReference type="FunFam" id="3.30.230.40:FF:000001">
    <property type="entry name" value="Imidazoleglycerol-phosphate dehydratase HisB"/>
    <property type="match status" value="1"/>
</dbReference>
<dbReference type="FunFam" id="3.30.230.40:FF:000003">
    <property type="entry name" value="Imidazoleglycerol-phosphate dehydratase HisB"/>
    <property type="match status" value="1"/>
</dbReference>
<dbReference type="Gene3D" id="3.30.230.40">
    <property type="entry name" value="Imidazole glycerol phosphate dehydratase, domain 1"/>
    <property type="match status" value="2"/>
</dbReference>
<dbReference type="HAMAP" id="MF_00076">
    <property type="entry name" value="HisB"/>
    <property type="match status" value="1"/>
</dbReference>
<dbReference type="InterPro" id="IPR038494">
    <property type="entry name" value="IGPD_sf"/>
</dbReference>
<dbReference type="InterPro" id="IPR000807">
    <property type="entry name" value="ImidazoleglycerolP_deHydtase"/>
</dbReference>
<dbReference type="InterPro" id="IPR020565">
    <property type="entry name" value="ImidazoleglycerP_deHydtase_CS"/>
</dbReference>
<dbReference type="InterPro" id="IPR020568">
    <property type="entry name" value="Ribosomal_Su5_D2-typ_SF"/>
</dbReference>
<dbReference type="NCBIfam" id="NF002107">
    <property type="entry name" value="PRK00951.1-2"/>
    <property type="match status" value="1"/>
</dbReference>
<dbReference type="NCBIfam" id="NF002111">
    <property type="entry name" value="PRK00951.2-1"/>
    <property type="match status" value="1"/>
</dbReference>
<dbReference type="NCBIfam" id="NF002114">
    <property type="entry name" value="PRK00951.2-4"/>
    <property type="match status" value="1"/>
</dbReference>
<dbReference type="PANTHER" id="PTHR23133:SF2">
    <property type="entry name" value="IMIDAZOLEGLYCEROL-PHOSPHATE DEHYDRATASE"/>
    <property type="match status" value="1"/>
</dbReference>
<dbReference type="PANTHER" id="PTHR23133">
    <property type="entry name" value="IMIDAZOLEGLYCEROL-PHOSPHATE DEHYDRATASE HIS7"/>
    <property type="match status" value="1"/>
</dbReference>
<dbReference type="Pfam" id="PF00475">
    <property type="entry name" value="IGPD"/>
    <property type="match status" value="1"/>
</dbReference>
<dbReference type="SUPFAM" id="SSF54211">
    <property type="entry name" value="Ribosomal protein S5 domain 2-like"/>
    <property type="match status" value="2"/>
</dbReference>
<dbReference type="PROSITE" id="PS00954">
    <property type="entry name" value="IGP_DEHYDRATASE_1"/>
    <property type="match status" value="1"/>
</dbReference>
<dbReference type="PROSITE" id="PS00955">
    <property type="entry name" value="IGP_DEHYDRATASE_2"/>
    <property type="match status" value="1"/>
</dbReference>
<reference key="1">
    <citation type="journal article" date="2006" name="J. Bacteriol.">
        <title>Pathogenomic sequence analysis of Bacillus cereus and Bacillus thuringiensis isolates closely related to Bacillus anthracis.</title>
        <authorList>
            <person name="Han C.S."/>
            <person name="Xie G."/>
            <person name="Challacombe J.F."/>
            <person name="Altherr M.R."/>
            <person name="Bhotika S.S."/>
            <person name="Bruce D."/>
            <person name="Campbell C.S."/>
            <person name="Campbell M.L."/>
            <person name="Chen J."/>
            <person name="Chertkov O."/>
            <person name="Cleland C."/>
            <person name="Dimitrijevic M."/>
            <person name="Doggett N.A."/>
            <person name="Fawcett J.J."/>
            <person name="Glavina T."/>
            <person name="Goodwin L.A."/>
            <person name="Hill K.K."/>
            <person name="Hitchcock P."/>
            <person name="Jackson P.J."/>
            <person name="Keim P."/>
            <person name="Kewalramani A.R."/>
            <person name="Longmire J."/>
            <person name="Lucas S."/>
            <person name="Malfatti S."/>
            <person name="McMurry K."/>
            <person name="Meincke L.J."/>
            <person name="Misra M."/>
            <person name="Moseman B.L."/>
            <person name="Mundt M."/>
            <person name="Munk A.C."/>
            <person name="Okinaka R.T."/>
            <person name="Parson-Quintana B."/>
            <person name="Reilly L.P."/>
            <person name="Richardson P."/>
            <person name="Robinson D.L."/>
            <person name="Rubin E."/>
            <person name="Saunders E."/>
            <person name="Tapia R."/>
            <person name="Tesmer J.G."/>
            <person name="Thayer N."/>
            <person name="Thompson L.S."/>
            <person name="Tice H."/>
            <person name="Ticknor L.O."/>
            <person name="Wills P.L."/>
            <person name="Brettin T.S."/>
            <person name="Gilna P."/>
        </authorList>
    </citation>
    <scope>NUCLEOTIDE SEQUENCE [LARGE SCALE GENOMIC DNA]</scope>
    <source>
        <strain>ZK / E33L</strain>
    </source>
</reference>
<protein>
    <recommendedName>
        <fullName evidence="1">Imidazoleglycerol-phosphate dehydratase</fullName>
        <shortName evidence="1">IGPD</shortName>
        <ecNumber evidence="1">4.2.1.19</ecNumber>
    </recommendedName>
</protein>
<feature type="chain" id="PRO_0000158105" description="Imidazoleglycerol-phosphate dehydratase">
    <location>
        <begin position="1"/>
        <end position="194"/>
    </location>
</feature>
<organism>
    <name type="scientific">Bacillus cereus (strain ZK / E33L)</name>
    <dbReference type="NCBI Taxonomy" id="288681"/>
    <lineage>
        <taxon>Bacteria</taxon>
        <taxon>Bacillati</taxon>
        <taxon>Bacillota</taxon>
        <taxon>Bacilli</taxon>
        <taxon>Bacillales</taxon>
        <taxon>Bacillaceae</taxon>
        <taxon>Bacillus</taxon>
        <taxon>Bacillus cereus group</taxon>
    </lineage>
</organism>
<accession>Q63DX1</accession>
<name>HIS7_BACCZ</name>
<sequence>MREFSQIRETTETKIKLSLQLDEGKNVSVQTGVGFFDHMLTLFARHGRFGLQVEAEGDVFVDAHHTVEDVGIVLGNCLKEALQNKEGINRYGSAYVPMDESLGFVAIDISGRSYIVFQGELTNPKLGDFDTELTEEFFRAVAHAANITLHARILYGSNTHHKIEALFKAFGRALREAVERNAHITGVNSTKGML</sequence>
<gene>
    <name evidence="1" type="primary">hisB</name>
    <name type="ordered locus">BCE33L1292</name>
</gene>
<keyword id="KW-0028">Amino-acid biosynthesis</keyword>
<keyword id="KW-0963">Cytoplasm</keyword>
<keyword id="KW-0368">Histidine biosynthesis</keyword>
<keyword id="KW-0456">Lyase</keyword>
<comment type="catalytic activity">
    <reaction evidence="1">
        <text>D-erythro-1-(imidazol-4-yl)glycerol 3-phosphate = 3-(imidazol-4-yl)-2-oxopropyl phosphate + H2O</text>
        <dbReference type="Rhea" id="RHEA:11040"/>
        <dbReference type="ChEBI" id="CHEBI:15377"/>
        <dbReference type="ChEBI" id="CHEBI:57766"/>
        <dbReference type="ChEBI" id="CHEBI:58278"/>
        <dbReference type="EC" id="4.2.1.19"/>
    </reaction>
</comment>
<comment type="pathway">
    <text evidence="1">Amino-acid biosynthesis; L-histidine biosynthesis; L-histidine from 5-phospho-alpha-D-ribose 1-diphosphate: step 6/9.</text>
</comment>
<comment type="subcellular location">
    <subcellularLocation>
        <location evidence="1">Cytoplasm</location>
    </subcellularLocation>
</comment>
<comment type="similarity">
    <text evidence="1">Belongs to the imidazoleglycerol-phosphate dehydratase family.</text>
</comment>
<evidence type="ECO:0000255" key="1">
    <source>
        <dbReference type="HAMAP-Rule" id="MF_00076"/>
    </source>
</evidence>